<name>YO296_YEAST</name>
<comment type="subcellular location">
    <subcellularLocation>
        <location evidence="5">Cytoplasm</location>
    </subcellularLocation>
</comment>
<comment type="miscellaneous">
    <text evidence="6">Present with 300 molecules/cell in log phase SD medium.</text>
</comment>
<reference key="1">
    <citation type="journal article" date="1997" name="Yeast">
        <title>Sequence and analysis of a 36.2 kb fragment from the right arm of yeast chromosome XV reveals 19 open reading frames including SNF2 (5' end), CPA1, SLY41, a putative transport ATPase, a putative ribosomal protein and an SNF2 homologue.</title>
        <authorList>
            <person name="Poirey R."/>
            <person name="Cziepluch C."/>
            <person name="Tobiasch E."/>
            <person name="Pujol A."/>
            <person name="Kordes E."/>
            <person name="Jauniaux J.-C."/>
        </authorList>
    </citation>
    <scope>NUCLEOTIDE SEQUENCE [GENOMIC DNA]</scope>
</reference>
<reference key="2">
    <citation type="journal article" date="1997" name="Nature">
        <title>The nucleotide sequence of Saccharomyces cerevisiae chromosome XV.</title>
        <authorList>
            <person name="Dujon B."/>
            <person name="Albermann K."/>
            <person name="Aldea M."/>
            <person name="Alexandraki D."/>
            <person name="Ansorge W."/>
            <person name="Arino J."/>
            <person name="Benes V."/>
            <person name="Bohn C."/>
            <person name="Bolotin-Fukuhara M."/>
            <person name="Bordonne R."/>
            <person name="Boyer J."/>
            <person name="Camasses A."/>
            <person name="Casamayor A."/>
            <person name="Casas C."/>
            <person name="Cheret G."/>
            <person name="Cziepluch C."/>
            <person name="Daignan-Fornier B."/>
            <person name="Dang V.-D."/>
            <person name="de Haan M."/>
            <person name="Delius H."/>
            <person name="Durand P."/>
            <person name="Fairhead C."/>
            <person name="Feldmann H."/>
            <person name="Gaillon L."/>
            <person name="Galisson F."/>
            <person name="Gamo F.-J."/>
            <person name="Gancedo C."/>
            <person name="Goffeau A."/>
            <person name="Goulding S.E."/>
            <person name="Grivell L.A."/>
            <person name="Habbig B."/>
            <person name="Hand N.J."/>
            <person name="Hani J."/>
            <person name="Hattenhorst U."/>
            <person name="Hebling U."/>
            <person name="Hernando Y."/>
            <person name="Herrero E."/>
            <person name="Heumann K."/>
            <person name="Hiesel R."/>
            <person name="Hilger F."/>
            <person name="Hofmann B."/>
            <person name="Hollenberg C.P."/>
            <person name="Hughes B."/>
            <person name="Jauniaux J.-C."/>
            <person name="Kalogeropoulos A."/>
            <person name="Katsoulou C."/>
            <person name="Kordes E."/>
            <person name="Lafuente M.J."/>
            <person name="Landt O."/>
            <person name="Louis E.J."/>
            <person name="Maarse A.C."/>
            <person name="Madania A."/>
            <person name="Mannhaupt G."/>
            <person name="Marck C."/>
            <person name="Martin R.P."/>
            <person name="Mewes H.-W."/>
            <person name="Michaux G."/>
            <person name="Paces V."/>
            <person name="Parle-McDermott A.G."/>
            <person name="Pearson B.M."/>
            <person name="Perrin A."/>
            <person name="Pettersson B."/>
            <person name="Poch O."/>
            <person name="Pohl T.M."/>
            <person name="Poirey R."/>
            <person name="Portetelle D."/>
            <person name="Pujol A."/>
            <person name="Purnelle B."/>
            <person name="Ramezani Rad M."/>
            <person name="Rechmann S."/>
            <person name="Schwager C."/>
            <person name="Schweizer M."/>
            <person name="Sor F."/>
            <person name="Sterky F."/>
            <person name="Tarassov I.A."/>
            <person name="Teodoru C."/>
            <person name="Tettelin H."/>
            <person name="Thierry A."/>
            <person name="Tobiasch E."/>
            <person name="Tzermia M."/>
            <person name="Uhlen M."/>
            <person name="Unseld M."/>
            <person name="Valens M."/>
            <person name="Vandenbol M."/>
            <person name="Vetter I."/>
            <person name="Vlcek C."/>
            <person name="Voet M."/>
            <person name="Volckaert G."/>
            <person name="Voss H."/>
            <person name="Wambutt R."/>
            <person name="Wedler H."/>
            <person name="Wiemann S."/>
            <person name="Winsor B."/>
            <person name="Wolfe K.H."/>
            <person name="Zollner A."/>
            <person name="Zumstein E."/>
            <person name="Kleine K."/>
        </authorList>
    </citation>
    <scope>NUCLEOTIDE SEQUENCE [LARGE SCALE GENOMIC DNA]</scope>
    <source>
        <strain>ATCC 204508 / S288c</strain>
    </source>
</reference>
<reference key="3">
    <citation type="journal article" date="2014" name="G3 (Bethesda)">
        <title>The reference genome sequence of Saccharomyces cerevisiae: Then and now.</title>
        <authorList>
            <person name="Engel S.R."/>
            <person name="Dietrich F.S."/>
            <person name="Fisk D.G."/>
            <person name="Binkley G."/>
            <person name="Balakrishnan R."/>
            <person name="Costanzo M.C."/>
            <person name="Dwight S.S."/>
            <person name="Hitz B.C."/>
            <person name="Karra K."/>
            <person name="Nash R.S."/>
            <person name="Weng S."/>
            <person name="Wong E.D."/>
            <person name="Lloyd P."/>
            <person name="Skrzypek M.S."/>
            <person name="Miyasato S.R."/>
            <person name="Simison M."/>
            <person name="Cherry J.M."/>
        </authorList>
    </citation>
    <scope>GENOME REANNOTATION</scope>
    <source>
        <strain>ATCC 204508 / S288c</strain>
    </source>
</reference>
<reference key="4">
    <citation type="journal article" date="2003" name="Nature">
        <title>Global analysis of protein localization in budding yeast.</title>
        <authorList>
            <person name="Huh W.-K."/>
            <person name="Falvo J.V."/>
            <person name="Gerke L.C."/>
            <person name="Carroll A.S."/>
            <person name="Howson R.W."/>
            <person name="Weissman J.S."/>
            <person name="O'Shea E.K."/>
        </authorList>
    </citation>
    <scope>SUBCELLULAR LOCATION [LARGE SCALE ANALYSIS]</scope>
</reference>
<reference key="5">
    <citation type="journal article" date="2003" name="Nature">
        <title>Global analysis of protein expression in yeast.</title>
        <authorList>
            <person name="Ghaemmaghami S."/>
            <person name="Huh W.-K."/>
            <person name="Bower K."/>
            <person name="Howson R.W."/>
            <person name="Belle A."/>
            <person name="Dephoure N."/>
            <person name="O'Shea E.K."/>
            <person name="Weissman J.S."/>
        </authorList>
    </citation>
    <scope>LEVEL OF PROTEIN EXPRESSION [LARGE SCALE ANALYSIS]</scope>
</reference>
<evidence type="ECO:0000255" key="1">
    <source>
        <dbReference type="PROSITE-ProRule" id="PRU00041"/>
    </source>
</evidence>
<evidence type="ECO:0000255" key="2">
    <source>
        <dbReference type="PROSITE-ProRule" id="PRU00587"/>
    </source>
</evidence>
<evidence type="ECO:0000255" key="3">
    <source>
        <dbReference type="PROSITE-ProRule" id="PRU00588"/>
    </source>
</evidence>
<evidence type="ECO:0000256" key="4">
    <source>
        <dbReference type="SAM" id="MobiDB-lite"/>
    </source>
</evidence>
<evidence type="ECO:0000269" key="5">
    <source>
    </source>
</evidence>
<evidence type="ECO:0000269" key="6">
    <source>
    </source>
</evidence>
<dbReference type="EMBL" id="Z75204">
    <property type="protein sequence ID" value="CAA99524.1"/>
    <property type="molecule type" value="Genomic_DNA"/>
</dbReference>
<dbReference type="EMBL" id="BK006948">
    <property type="protein sequence ID" value="DAA11061.1"/>
    <property type="molecule type" value="Genomic_DNA"/>
</dbReference>
<dbReference type="PIR" id="S67200">
    <property type="entry name" value="S67200"/>
</dbReference>
<dbReference type="RefSeq" id="NP_014939.1">
    <property type="nucleotide sequence ID" value="NM_001183715.1"/>
</dbReference>
<dbReference type="SMR" id="Q08748"/>
<dbReference type="BioGRID" id="34684">
    <property type="interactions" value="94"/>
</dbReference>
<dbReference type="FunCoup" id="Q08748">
    <property type="interactions" value="121"/>
</dbReference>
<dbReference type="IntAct" id="Q08748">
    <property type="interactions" value="2"/>
</dbReference>
<dbReference type="MINT" id="Q08748"/>
<dbReference type="STRING" id="4932.YOR296W"/>
<dbReference type="GlyGen" id="Q08748">
    <property type="glycosylation" value="1 site"/>
</dbReference>
<dbReference type="iPTMnet" id="Q08748"/>
<dbReference type="PaxDb" id="4932-YOR296W"/>
<dbReference type="PeptideAtlas" id="Q08748"/>
<dbReference type="EnsemblFungi" id="YOR296W_mRNA">
    <property type="protein sequence ID" value="YOR296W"/>
    <property type="gene ID" value="YOR296W"/>
</dbReference>
<dbReference type="GeneID" id="854471"/>
<dbReference type="KEGG" id="sce:YOR296W"/>
<dbReference type="AGR" id="SGD:S000005822"/>
<dbReference type="SGD" id="S000005822">
    <property type="gene designation" value="YOR296W"/>
</dbReference>
<dbReference type="VEuPathDB" id="FungiDB:YOR296W"/>
<dbReference type="eggNOG" id="ENOG502QQWJ">
    <property type="taxonomic scope" value="Eukaryota"/>
</dbReference>
<dbReference type="GeneTree" id="ENSGT00730000110939"/>
<dbReference type="HOGENOM" id="CLU_003023_1_0_1"/>
<dbReference type="InParanoid" id="Q08748"/>
<dbReference type="OMA" id="VLKSPKW"/>
<dbReference type="OrthoDB" id="2015333at2759"/>
<dbReference type="BioCyc" id="YEAST:G3O-33781-MONOMER"/>
<dbReference type="BioGRID-ORCS" id="854471">
    <property type="hits" value="0 hits in 10 CRISPR screens"/>
</dbReference>
<dbReference type="PRO" id="PR:Q08748"/>
<dbReference type="Proteomes" id="UP000002311">
    <property type="component" value="Chromosome XV"/>
</dbReference>
<dbReference type="RNAct" id="Q08748">
    <property type="molecule type" value="protein"/>
</dbReference>
<dbReference type="GO" id="GO:0005737">
    <property type="term" value="C:cytoplasm"/>
    <property type="evidence" value="ECO:0007005"/>
    <property type="project" value="SGD"/>
</dbReference>
<dbReference type="CDD" id="cd04043">
    <property type="entry name" value="C2_Munc13_fungal"/>
    <property type="match status" value="1"/>
</dbReference>
<dbReference type="FunFam" id="1.20.58.1100:FF:000004">
    <property type="entry name" value="Conserved protein"/>
    <property type="match status" value="1"/>
</dbReference>
<dbReference type="FunFam" id="2.60.40.150:FF:000297">
    <property type="entry name" value="YOR296W"/>
    <property type="match status" value="1"/>
</dbReference>
<dbReference type="Gene3D" id="1.10.357.50">
    <property type="match status" value="1"/>
</dbReference>
<dbReference type="Gene3D" id="1.20.58.1100">
    <property type="match status" value="1"/>
</dbReference>
<dbReference type="Gene3D" id="2.60.40.150">
    <property type="entry name" value="C2 domain"/>
    <property type="match status" value="1"/>
</dbReference>
<dbReference type="InterPro" id="IPR000008">
    <property type="entry name" value="C2_dom"/>
</dbReference>
<dbReference type="InterPro" id="IPR035892">
    <property type="entry name" value="C2_domain_sf"/>
</dbReference>
<dbReference type="InterPro" id="IPR052811">
    <property type="entry name" value="Glucose_resp_signaling"/>
</dbReference>
<dbReference type="InterPro" id="IPR014770">
    <property type="entry name" value="Munc13_1"/>
</dbReference>
<dbReference type="InterPro" id="IPR014772">
    <property type="entry name" value="Munc13_dom-2"/>
</dbReference>
<dbReference type="PANTHER" id="PTHR47263">
    <property type="entry name" value="ADENYLATE CYCLASE ACTIVATION PROTEIN GIT1"/>
    <property type="match status" value="1"/>
</dbReference>
<dbReference type="PANTHER" id="PTHR47263:SF1">
    <property type="entry name" value="C2 DOMAIN PROTEIN (AFU_ORTHOLOGUE AFUA_7G02350)"/>
    <property type="match status" value="1"/>
</dbReference>
<dbReference type="Pfam" id="PF00168">
    <property type="entry name" value="C2"/>
    <property type="match status" value="1"/>
</dbReference>
<dbReference type="SMART" id="SM00239">
    <property type="entry name" value="C2"/>
    <property type="match status" value="1"/>
</dbReference>
<dbReference type="SUPFAM" id="SSF49562">
    <property type="entry name" value="C2 domain (Calcium/lipid-binding domain, CaLB)"/>
    <property type="match status" value="1"/>
</dbReference>
<dbReference type="PROSITE" id="PS50004">
    <property type="entry name" value="C2"/>
    <property type="match status" value="1"/>
</dbReference>
<dbReference type="PROSITE" id="PS51258">
    <property type="entry name" value="MHD1"/>
    <property type="match status" value="1"/>
</dbReference>
<dbReference type="PROSITE" id="PS51259">
    <property type="entry name" value="MHD2"/>
    <property type="match status" value="1"/>
</dbReference>
<proteinExistence type="evidence at protein level"/>
<protein>
    <recommendedName>
        <fullName>Uncharacterized protein YOR296W</fullName>
    </recommendedName>
</protein>
<feature type="chain" id="PRO_0000245284" description="Uncharacterized protein YOR296W">
    <location>
        <begin position="1"/>
        <end position="1289"/>
    </location>
</feature>
<feature type="domain" description="MHD1" evidence="2">
    <location>
        <begin position="615"/>
        <end position="733"/>
    </location>
</feature>
<feature type="domain" description="C2" evidence="1">
    <location>
        <begin position="834"/>
        <end position="966"/>
    </location>
</feature>
<feature type="domain" description="MHD2" evidence="3">
    <location>
        <begin position="1044"/>
        <end position="1184"/>
    </location>
</feature>
<feature type="region of interest" description="Disordered" evidence="4">
    <location>
        <begin position="745"/>
        <end position="774"/>
    </location>
</feature>
<feature type="compositionally biased region" description="Low complexity" evidence="4">
    <location>
        <begin position="748"/>
        <end position="762"/>
    </location>
</feature>
<organism>
    <name type="scientific">Saccharomyces cerevisiae (strain ATCC 204508 / S288c)</name>
    <name type="common">Baker's yeast</name>
    <dbReference type="NCBI Taxonomy" id="559292"/>
    <lineage>
        <taxon>Eukaryota</taxon>
        <taxon>Fungi</taxon>
        <taxon>Dikarya</taxon>
        <taxon>Ascomycota</taxon>
        <taxon>Saccharomycotina</taxon>
        <taxon>Saccharomycetes</taxon>
        <taxon>Saccharomycetales</taxon>
        <taxon>Saccharomycetaceae</taxon>
        <taxon>Saccharomyces</taxon>
    </lineage>
</organism>
<gene>
    <name type="ordered locus">YOR296W</name>
</gene>
<accession>Q08748</accession>
<accession>D6W2Z5</accession>
<keyword id="KW-0963">Cytoplasm</keyword>
<keyword id="KW-1185">Reference proteome</keyword>
<sequence>MNRTVSTLSSTVSDVSVEIPSICNVINTELPTSDVYLYTLKLILLDYINEPRFKEAALLSNRTGTSRVLSDKTNHQQTQHGKKLVVDKQDDMSERDIVQATLRILKGKLAQISGNKNLAPNEMHWKSIVKMYYSMLDSSSADTFSKMGQMEEVVGYFTNIASNELKKMTIKNSRDELFSEVAYFIDLVIDVLPDSCANIIKRLLDYKINLKKGETTVKKKRAASPATVPQYRSISGSTISNKQPSFKVQDISHMKYFMQLFETDETKLHQDVMAVKDDCTNPIFCGELRYLRKKIKKDNGTLTASDFSSDREYNLWKNYELLEIANLMDRFEIGEKVTSHGNRLIPKDAKSVFVRLIGLVLKKECSNAVNAINLSQEALFFFHKSARYWRIEYPSTISSLVYSAANLSVLGDEELNIPITENLFSVIRNKYLCSEDNLDPSAWNAQDRYLWAANLFHTTDQSMRTINNLLTAIFSGTKPKFSPVLSFYYSNIVGDPVMEFYETQSVAVKKYWIKLFKKTLFKASEDYFVSLLQDMLKANAIEIQNVQNLVETIIEAIKAIQKRYNKPLLDEISLPRQCAVFLCEVYGSDSLNLIKTAEKSTMKMTGQKLGPIDALDMYDVLKELRQIYLQVKPKGKFFFNLENYFIKYLTRLCDDVSRNVQKVIKSSLESENWQPVNDQDHFSRSVLDIFKMINESTSMLEKFGWQNEFQLAQMITVILKAFSDGMLSYSAQLMELIQRDLQEGDEPSYSLESSDTRSSLSLNNANVNHEKSRSSRLFEDLKNVVKSTPKMVAPAPYQFKKRTCVLLNDLDKTLFLLESFEEKADPSKISSVIAQYHSSHNLEDNGKSFDDQNMKQVYTLRIIGAENIKGFSKTGLSNTYVSMRNITLQREIGTTKIVARSITPKWDEEFVFESPFGKSNDIMFTIWHHPHSRLKNLAEDDLCGKANMKFTPRKLKDDGFPIDFSLTLNPQGTLYCQISLESEKIDAVSSMGRIYRSFSRSRDRAINLIVNKFSDFIAFAFSRTTLKTVCGHHGSALASDEAVYDAILPLFDYLNANLNILASELSQRLLFMVMLRAWNLVLENADLLLLPALNSAKVNILRSAKKSLWENTLSTTKTVSGYGRPLTQAEIEAVFKWLDALCVDFFHNKGEGPPLAELKNEYYQNILLIPAFYDKSVSELKDEVQRLIPLYEEYLRWFYLKKTPITFTNKSAGTISRKKSLVANIVKEPKEQLERDAEVMNIILRILIAKGQHDYVHRILHDRKELVNTMKNRRAVSRAVTPTGKKGRN</sequence>